<comment type="function">
    <text evidence="2 3">Cytokine that acts as a ligand to CD40/TNFRSF5 (By similarity). Costimulates T-cell proliferation and cytokine production (By similarity). Its cross-linking on T-cells generates a costimulatory signal which enhances the production of IL4 and IL10 in conjunction with the TCR/CD3 ligation and CD28 costimulation (By similarity). Induces the activation of NF-kappa-B (By similarity). Induces the activation of kinases MAPK8 and PAK2 in T-cells (By similarity). Mediates B-cell proliferation in the absence of co-stimulus as well as IgE production in the presence of IL4 (By similarity). Involved in immunoglobulin class switching (By similarity).</text>
</comment>
<comment type="function">
    <molecule>CD40 ligand, soluble form</molecule>
    <text evidence="3">Acts as a ligand for integrins, specifically ITGA5:ITGB1 and ITGAV:ITGB3; both integrins and the CD40 receptor are required for activation of CD40-CD40LG signaling, which have cell-type dependent effects, such as B-cell activation, NF-kappa-B signaling and anti-apoptotic signaling.</text>
</comment>
<comment type="subunit">
    <text evidence="3">Homotrimer (By similarity). Interacts with CD28 (By similarity). CD40 ligand, soluble form: Exists as either a monomer or a homotrimer (By similarity). Forms a ternary complex between CD40 and integrins for CD40-CD40LG signaling (By similarity).</text>
</comment>
<comment type="subcellular location">
    <subcellularLocation>
        <location evidence="3">Cell membrane</location>
        <topology evidence="3">Single-pass type II membrane protein</topology>
    </subcellularLocation>
    <subcellularLocation>
        <location evidence="3">Cell surface</location>
    </subcellularLocation>
</comment>
<comment type="subcellular location">
    <molecule>CD40 ligand, soluble form</molecule>
    <subcellularLocation>
        <location evidence="3">Secreted</location>
    </subcellularLocation>
    <text evidence="3">Release of soluble CD40L from platelets is partially regulated by GP IIb/IIIa, actin polymerization, and a matrix metalloproteinases (MMP) inhibitor-sensitive pathway.</text>
</comment>
<comment type="PTM">
    <text evidence="3">The soluble form derives from the membrane form by proteolytic processing.</text>
</comment>
<comment type="similarity">
    <text evidence="6">Belongs to the tumor necrosis factor family.</text>
</comment>
<gene>
    <name type="primary">CD40LG</name>
    <name type="synonym">CD40L</name>
    <name type="synonym">TNFSF5</name>
</gene>
<dbReference type="EMBL" id="AF344844">
    <property type="protein sequence ID" value="AAK37603.1"/>
    <property type="molecule type" value="mRNA"/>
</dbReference>
<dbReference type="RefSeq" id="NP_001254684.1">
    <property type="nucleotide sequence ID" value="NM_001267755.1"/>
</dbReference>
<dbReference type="SMR" id="Q9BDN3"/>
<dbReference type="FunCoup" id="Q9BDN3">
    <property type="interactions" value="556"/>
</dbReference>
<dbReference type="STRING" id="9483.ENSCJAP00000056697"/>
<dbReference type="GlyCosmos" id="Q9BDN3">
    <property type="glycosylation" value="1 site, No reported glycans"/>
</dbReference>
<dbReference type="GeneID" id="100390012"/>
<dbReference type="KEGG" id="cjc:100390012"/>
<dbReference type="CTD" id="959"/>
<dbReference type="eggNOG" id="KOG3656">
    <property type="taxonomic scope" value="Eukaryota"/>
</dbReference>
<dbReference type="InParanoid" id="Q9BDN3"/>
<dbReference type="OrthoDB" id="8667946at2759"/>
<dbReference type="Proteomes" id="UP000008225">
    <property type="component" value="Unplaced"/>
</dbReference>
<dbReference type="GO" id="GO:0009986">
    <property type="term" value="C:cell surface"/>
    <property type="evidence" value="ECO:0000250"/>
    <property type="project" value="UniProtKB"/>
</dbReference>
<dbReference type="GO" id="GO:0005615">
    <property type="term" value="C:extracellular space"/>
    <property type="evidence" value="ECO:0007669"/>
    <property type="project" value="UniProtKB-KW"/>
</dbReference>
<dbReference type="GO" id="GO:0005886">
    <property type="term" value="C:plasma membrane"/>
    <property type="evidence" value="ECO:0007669"/>
    <property type="project" value="UniProtKB-SubCell"/>
</dbReference>
<dbReference type="GO" id="GO:0005174">
    <property type="term" value="F:CD40 receptor binding"/>
    <property type="evidence" value="ECO:0000250"/>
    <property type="project" value="UniProtKB"/>
</dbReference>
<dbReference type="GO" id="GO:0005125">
    <property type="term" value="F:cytokine activity"/>
    <property type="evidence" value="ECO:0007669"/>
    <property type="project" value="UniProtKB-KW"/>
</dbReference>
<dbReference type="GO" id="GO:0043539">
    <property type="term" value="F:protein serine/threonine kinase activator activity"/>
    <property type="evidence" value="ECO:0000250"/>
    <property type="project" value="UniProtKB"/>
</dbReference>
<dbReference type="GO" id="GO:0005164">
    <property type="term" value="F:tumor necrosis factor receptor binding"/>
    <property type="evidence" value="ECO:0007669"/>
    <property type="project" value="InterPro"/>
</dbReference>
<dbReference type="GO" id="GO:0042100">
    <property type="term" value="P:B cell proliferation"/>
    <property type="evidence" value="ECO:0000250"/>
    <property type="project" value="UniProtKB"/>
</dbReference>
<dbReference type="GO" id="GO:0006955">
    <property type="term" value="P:immune response"/>
    <property type="evidence" value="ECO:0007669"/>
    <property type="project" value="InterPro"/>
</dbReference>
<dbReference type="GO" id="GO:0006954">
    <property type="term" value="P:inflammatory response"/>
    <property type="evidence" value="ECO:0000250"/>
    <property type="project" value="UniProtKB"/>
</dbReference>
<dbReference type="GO" id="GO:0030168">
    <property type="term" value="P:platelet activation"/>
    <property type="evidence" value="ECO:0000250"/>
    <property type="project" value="UniProtKB"/>
</dbReference>
<dbReference type="GO" id="GO:0032733">
    <property type="term" value="P:positive regulation of interleukin-10 production"/>
    <property type="evidence" value="ECO:0000250"/>
    <property type="project" value="UniProtKB"/>
</dbReference>
<dbReference type="GO" id="GO:0032753">
    <property type="term" value="P:positive regulation of interleukin-4 production"/>
    <property type="evidence" value="ECO:0000250"/>
    <property type="project" value="UniProtKB"/>
</dbReference>
<dbReference type="GO" id="GO:0051092">
    <property type="term" value="P:positive regulation of NF-kappaB transcription factor activity"/>
    <property type="evidence" value="ECO:0000250"/>
    <property type="project" value="UniProtKB"/>
</dbReference>
<dbReference type="GO" id="GO:0042102">
    <property type="term" value="P:positive regulation of T cell proliferation"/>
    <property type="evidence" value="ECO:0000250"/>
    <property type="project" value="UniProtKB"/>
</dbReference>
<dbReference type="CDD" id="cd00184">
    <property type="entry name" value="TNF"/>
    <property type="match status" value="1"/>
</dbReference>
<dbReference type="FunFam" id="2.60.120.40:FF:000013">
    <property type="entry name" value="CD40 ligand"/>
    <property type="match status" value="1"/>
</dbReference>
<dbReference type="Gene3D" id="2.60.120.40">
    <property type="match status" value="1"/>
</dbReference>
<dbReference type="InterPro" id="IPR003263">
    <property type="entry name" value="CD40L"/>
</dbReference>
<dbReference type="InterPro" id="IPR021184">
    <property type="entry name" value="TNF_CS"/>
</dbReference>
<dbReference type="InterPro" id="IPR006052">
    <property type="entry name" value="TNF_dom"/>
</dbReference>
<dbReference type="InterPro" id="IPR008983">
    <property type="entry name" value="Tumour_necrosis_fac-like_dom"/>
</dbReference>
<dbReference type="PANTHER" id="PTHR11471:SF5">
    <property type="entry name" value="CD40 LIGAND"/>
    <property type="match status" value="1"/>
</dbReference>
<dbReference type="PANTHER" id="PTHR11471">
    <property type="entry name" value="TUMOR NECROSIS FACTOR FAMILY MEMBER"/>
    <property type="match status" value="1"/>
</dbReference>
<dbReference type="Pfam" id="PF00229">
    <property type="entry name" value="TNF"/>
    <property type="match status" value="1"/>
</dbReference>
<dbReference type="PIRSF" id="PIRSF016527">
    <property type="entry name" value="TNF_5"/>
    <property type="match status" value="1"/>
</dbReference>
<dbReference type="PRINTS" id="PR01702">
    <property type="entry name" value="CD40LIGAND"/>
</dbReference>
<dbReference type="SMART" id="SM00207">
    <property type="entry name" value="TNF"/>
    <property type="match status" value="1"/>
</dbReference>
<dbReference type="SUPFAM" id="SSF49842">
    <property type="entry name" value="TNF-like"/>
    <property type="match status" value="1"/>
</dbReference>
<dbReference type="PROSITE" id="PS00251">
    <property type="entry name" value="THD_1"/>
    <property type="match status" value="1"/>
</dbReference>
<dbReference type="PROSITE" id="PS50049">
    <property type="entry name" value="THD_2"/>
    <property type="match status" value="1"/>
</dbReference>
<accession>Q9BDN3</accession>
<proteinExistence type="evidence at transcript level"/>
<evidence type="ECO:0000250" key="1"/>
<evidence type="ECO:0000250" key="2">
    <source>
        <dbReference type="UniProtKB" id="P27548"/>
    </source>
</evidence>
<evidence type="ECO:0000250" key="3">
    <source>
        <dbReference type="UniProtKB" id="P29965"/>
    </source>
</evidence>
<evidence type="ECO:0000255" key="4"/>
<evidence type="ECO:0000255" key="5">
    <source>
        <dbReference type="PROSITE-ProRule" id="PRU01387"/>
    </source>
</evidence>
<evidence type="ECO:0000305" key="6"/>
<organism>
    <name type="scientific">Callithrix jacchus</name>
    <name type="common">White-tufted-ear marmoset</name>
    <dbReference type="NCBI Taxonomy" id="9483"/>
    <lineage>
        <taxon>Eukaryota</taxon>
        <taxon>Metazoa</taxon>
        <taxon>Chordata</taxon>
        <taxon>Craniata</taxon>
        <taxon>Vertebrata</taxon>
        <taxon>Euteleostomi</taxon>
        <taxon>Mammalia</taxon>
        <taxon>Eutheria</taxon>
        <taxon>Euarchontoglires</taxon>
        <taxon>Primates</taxon>
        <taxon>Haplorrhini</taxon>
        <taxon>Platyrrhini</taxon>
        <taxon>Cebidae</taxon>
        <taxon>Callitrichinae</taxon>
        <taxon>Callithrix</taxon>
        <taxon>Callithrix</taxon>
    </lineage>
</organism>
<sequence length="261" mass="29360">MIETYNQPVPRSAATGPPVSMKIFMYLLTVFLITQMIGSALFAVYLHRRLDKIEDERNLHEDFVFMKTIQRCNTGERSLSLLNCEEIKSQFEGFVKDIMLNKEEKKKENSFEMQKGDQNPQIAAHVISEASSKTTSVLQWAEKGYYTMSNNLVTLENGKQLTVKRQGLYYIYAQVTFCSNREASSQAPFIASLCLKPPNRFERILLRAANTHSSAKPCGQQSIHLGGIFELQPGASVFVNVTDPSQVSHGTGFTSFGLLKL</sequence>
<name>CD40L_CALJA</name>
<keyword id="KW-1003">Cell membrane</keyword>
<keyword id="KW-0202">Cytokine</keyword>
<keyword id="KW-1015">Disulfide bond</keyword>
<keyword id="KW-0325">Glycoprotein</keyword>
<keyword id="KW-0472">Membrane</keyword>
<keyword id="KW-1185">Reference proteome</keyword>
<keyword id="KW-0964">Secreted</keyword>
<keyword id="KW-0735">Signal-anchor</keyword>
<keyword id="KW-0812">Transmembrane</keyword>
<keyword id="KW-1133">Transmembrane helix</keyword>
<feature type="chain" id="PRO_0000034476" description="CD40 ligand, membrane form">
    <location>
        <begin position="1"/>
        <end position="261"/>
    </location>
</feature>
<feature type="chain" id="PRO_0000034477" description="CD40 ligand, soluble form" evidence="3">
    <location>
        <begin position="113"/>
        <end position="261"/>
    </location>
</feature>
<feature type="topological domain" description="Cytoplasmic" evidence="4">
    <location>
        <begin position="1"/>
        <end position="22"/>
    </location>
</feature>
<feature type="transmembrane region" description="Helical; Signal-anchor for type II membrane protein" evidence="4">
    <location>
        <begin position="23"/>
        <end position="43"/>
    </location>
</feature>
<feature type="topological domain" description="Extracellular" evidence="4">
    <location>
        <begin position="44"/>
        <end position="261"/>
    </location>
</feature>
<feature type="domain" description="THD" evidence="5">
    <location>
        <begin position="122"/>
        <end position="261"/>
    </location>
</feature>
<feature type="site" description="Cleavage" evidence="1">
    <location>
        <begin position="112"/>
        <end position="113"/>
    </location>
</feature>
<feature type="glycosylation site" description="N-linked (GlcNAc...) asparagine" evidence="4">
    <location>
        <position position="240"/>
    </location>
</feature>
<feature type="disulfide bond" evidence="5">
    <location>
        <begin position="178"/>
        <end position="218"/>
    </location>
</feature>
<reference key="1">
    <citation type="journal article" date="2001" name="Immunogenetics">
        <title>Cloning, sequencing, and homology analysis of nonhuman primate Fas/Fas-ligand and co-stimulatory molecules.</title>
        <authorList>
            <person name="Villinger F.J."/>
            <person name="Bostik P."/>
            <person name="Mayne A.E."/>
            <person name="King C.L."/>
            <person name="Genain C.P."/>
            <person name="Weiss W.R."/>
            <person name="Ansari A.A."/>
        </authorList>
    </citation>
    <scope>NUCLEOTIDE SEQUENCE [MRNA]</scope>
    <source>
        <tissue>Lymphocyte</tissue>
    </source>
</reference>
<protein>
    <recommendedName>
        <fullName>CD40 ligand</fullName>
        <shortName>CD40-L</shortName>
    </recommendedName>
    <alternativeName>
        <fullName>Tumor necrosis factor ligand superfamily member 5</fullName>
    </alternativeName>
    <cdAntigenName>CD154</cdAntigenName>
    <component>
        <recommendedName>
            <fullName>CD40 ligand, membrane form</fullName>
        </recommendedName>
    </component>
    <component>
        <recommendedName>
            <fullName evidence="3">CD40 ligand, soluble form</fullName>
            <shortName evidence="3">sCD40L</shortName>
        </recommendedName>
    </component>
</protein>